<protein>
    <recommendedName>
        <fullName evidence="1">N-acetyl-gamma-glutamyl-phosphate reductase</fullName>
        <shortName evidence="1">AGPR</shortName>
        <ecNumber evidence="1">1.2.1.38</ecNumber>
    </recommendedName>
    <alternativeName>
        <fullName evidence="1">N-acetyl-glutamate semialdehyde dehydrogenase</fullName>
        <shortName evidence="1">NAGSA dehydrogenase</shortName>
    </alternativeName>
</protein>
<accession>B1YJL9</accession>
<proteinExistence type="inferred from homology"/>
<name>ARGC_EXIS2</name>
<sequence>MKCTIVGATGYAAIELIRLIELHPHLEIVSLISDSQTNQEMNDLYSFMNNKQFPVLTAFSLEQIEAVETDLLFLATPSGISTKYLKQLDDWKGTVIDLSGDLRLEKSLYEKWYPHESVDTVLQKKATYGLTEWKREQIKDSRLIANPGCYATAVLLGLLPLLEERVIDPSQIIIHASSGLSGAGKTLTEQTHHVRSSENVRLYKMNQHQHIPEIESIAEDITGQQITVSLATYLVPLNRGIMATMTLQPLVEKTEAEWRTWFIEKYKQESFIRVGQTDPEIKSAAGSNYCDISVYLDTRTGRLTVVSVLDNMQKGAAGQAIQNANVIGGYPETLGLTQQPFFI</sequence>
<evidence type="ECO:0000255" key="1">
    <source>
        <dbReference type="HAMAP-Rule" id="MF_00150"/>
    </source>
</evidence>
<reference key="1">
    <citation type="submission" date="2008-04" db="EMBL/GenBank/DDBJ databases">
        <title>Complete sequence of chromosome of Exiguobacterium sibiricum 255-15.</title>
        <authorList>
            <consortium name="US DOE Joint Genome Institute"/>
            <person name="Copeland A."/>
            <person name="Lucas S."/>
            <person name="Lapidus A."/>
            <person name="Glavina del Rio T."/>
            <person name="Dalin E."/>
            <person name="Tice H."/>
            <person name="Bruce D."/>
            <person name="Goodwin L."/>
            <person name="Pitluck S."/>
            <person name="Kiss H."/>
            <person name="Chertkov O."/>
            <person name="Monk C."/>
            <person name="Brettin T."/>
            <person name="Detter J.C."/>
            <person name="Han C."/>
            <person name="Kuske C.R."/>
            <person name="Schmutz J."/>
            <person name="Larimer F."/>
            <person name="Land M."/>
            <person name="Hauser L."/>
            <person name="Kyrpides N."/>
            <person name="Mikhailova N."/>
            <person name="Vishnivetskaya T."/>
            <person name="Rodrigues D.F."/>
            <person name="Gilichinsky D."/>
            <person name="Tiedje J."/>
            <person name="Richardson P."/>
        </authorList>
    </citation>
    <scope>NUCLEOTIDE SEQUENCE [LARGE SCALE GENOMIC DNA]</scope>
    <source>
        <strain>DSM 17290 / CCUG 55495 / CIP 109462 / JCM 13490 / 255-15</strain>
    </source>
</reference>
<keyword id="KW-0028">Amino-acid biosynthesis</keyword>
<keyword id="KW-0055">Arginine biosynthesis</keyword>
<keyword id="KW-0963">Cytoplasm</keyword>
<keyword id="KW-0521">NADP</keyword>
<keyword id="KW-0560">Oxidoreductase</keyword>
<keyword id="KW-1185">Reference proteome</keyword>
<feature type="chain" id="PRO_1000096724" description="N-acetyl-gamma-glutamyl-phosphate reductase">
    <location>
        <begin position="1"/>
        <end position="343"/>
    </location>
</feature>
<feature type="active site" evidence="1">
    <location>
        <position position="149"/>
    </location>
</feature>
<gene>
    <name evidence="1" type="primary">argC</name>
    <name type="ordered locus">Exig_0568</name>
</gene>
<organism>
    <name type="scientific">Exiguobacterium sibiricum (strain DSM 17290 / CCUG 55495 / CIP 109462 / JCM 13490 / 255-15)</name>
    <dbReference type="NCBI Taxonomy" id="262543"/>
    <lineage>
        <taxon>Bacteria</taxon>
        <taxon>Bacillati</taxon>
        <taxon>Bacillota</taxon>
        <taxon>Bacilli</taxon>
        <taxon>Bacillales</taxon>
        <taxon>Bacillales Family XII. Incertae Sedis</taxon>
        <taxon>Exiguobacterium</taxon>
    </lineage>
</organism>
<comment type="function">
    <text evidence="1">Catalyzes the NADPH-dependent reduction of N-acetyl-5-glutamyl phosphate to yield N-acetyl-L-glutamate 5-semialdehyde.</text>
</comment>
<comment type="catalytic activity">
    <reaction evidence="1">
        <text>N-acetyl-L-glutamate 5-semialdehyde + phosphate + NADP(+) = N-acetyl-L-glutamyl 5-phosphate + NADPH + H(+)</text>
        <dbReference type="Rhea" id="RHEA:21588"/>
        <dbReference type="ChEBI" id="CHEBI:15378"/>
        <dbReference type="ChEBI" id="CHEBI:29123"/>
        <dbReference type="ChEBI" id="CHEBI:43474"/>
        <dbReference type="ChEBI" id="CHEBI:57783"/>
        <dbReference type="ChEBI" id="CHEBI:57936"/>
        <dbReference type="ChEBI" id="CHEBI:58349"/>
        <dbReference type="EC" id="1.2.1.38"/>
    </reaction>
</comment>
<comment type="pathway">
    <text evidence="1">Amino-acid biosynthesis; L-arginine biosynthesis; N(2)-acetyl-L-ornithine from L-glutamate: step 3/4.</text>
</comment>
<comment type="subcellular location">
    <subcellularLocation>
        <location evidence="1">Cytoplasm</location>
    </subcellularLocation>
</comment>
<comment type="similarity">
    <text evidence="1">Belongs to the NAGSA dehydrogenase family. Type 1 subfamily.</text>
</comment>
<dbReference type="EC" id="1.2.1.38" evidence="1"/>
<dbReference type="EMBL" id="CP001022">
    <property type="protein sequence ID" value="ACB60049.1"/>
    <property type="molecule type" value="Genomic_DNA"/>
</dbReference>
<dbReference type="RefSeq" id="WP_012369473.1">
    <property type="nucleotide sequence ID" value="NC_010556.1"/>
</dbReference>
<dbReference type="SMR" id="B1YJL9"/>
<dbReference type="STRING" id="262543.Exig_0568"/>
<dbReference type="KEGG" id="esi:Exig_0568"/>
<dbReference type="eggNOG" id="COG0002">
    <property type="taxonomic scope" value="Bacteria"/>
</dbReference>
<dbReference type="HOGENOM" id="CLU_006384_0_1_9"/>
<dbReference type="OrthoDB" id="9801289at2"/>
<dbReference type="UniPathway" id="UPA00068">
    <property type="reaction ID" value="UER00108"/>
</dbReference>
<dbReference type="Proteomes" id="UP000001681">
    <property type="component" value="Chromosome"/>
</dbReference>
<dbReference type="GO" id="GO:0005737">
    <property type="term" value="C:cytoplasm"/>
    <property type="evidence" value="ECO:0007669"/>
    <property type="project" value="UniProtKB-SubCell"/>
</dbReference>
<dbReference type="GO" id="GO:0003942">
    <property type="term" value="F:N-acetyl-gamma-glutamyl-phosphate reductase activity"/>
    <property type="evidence" value="ECO:0007669"/>
    <property type="project" value="UniProtKB-UniRule"/>
</dbReference>
<dbReference type="GO" id="GO:0051287">
    <property type="term" value="F:NAD binding"/>
    <property type="evidence" value="ECO:0007669"/>
    <property type="project" value="InterPro"/>
</dbReference>
<dbReference type="GO" id="GO:0070401">
    <property type="term" value="F:NADP+ binding"/>
    <property type="evidence" value="ECO:0007669"/>
    <property type="project" value="InterPro"/>
</dbReference>
<dbReference type="GO" id="GO:0006526">
    <property type="term" value="P:L-arginine biosynthetic process"/>
    <property type="evidence" value="ECO:0007669"/>
    <property type="project" value="UniProtKB-UniRule"/>
</dbReference>
<dbReference type="CDD" id="cd23934">
    <property type="entry name" value="AGPR_1_C"/>
    <property type="match status" value="1"/>
</dbReference>
<dbReference type="CDD" id="cd17895">
    <property type="entry name" value="AGPR_1_N"/>
    <property type="match status" value="1"/>
</dbReference>
<dbReference type="Gene3D" id="3.30.360.10">
    <property type="entry name" value="Dihydrodipicolinate Reductase, domain 2"/>
    <property type="match status" value="1"/>
</dbReference>
<dbReference type="Gene3D" id="3.40.50.720">
    <property type="entry name" value="NAD(P)-binding Rossmann-like Domain"/>
    <property type="match status" value="1"/>
</dbReference>
<dbReference type="HAMAP" id="MF_00150">
    <property type="entry name" value="ArgC_type1"/>
    <property type="match status" value="1"/>
</dbReference>
<dbReference type="InterPro" id="IPR023013">
    <property type="entry name" value="AGPR_AS"/>
</dbReference>
<dbReference type="InterPro" id="IPR000706">
    <property type="entry name" value="AGPR_type-1"/>
</dbReference>
<dbReference type="InterPro" id="IPR036291">
    <property type="entry name" value="NAD(P)-bd_dom_sf"/>
</dbReference>
<dbReference type="InterPro" id="IPR050085">
    <property type="entry name" value="NAGSA_dehydrogenase"/>
</dbReference>
<dbReference type="InterPro" id="IPR000534">
    <property type="entry name" value="Semialdehyde_DH_NAD-bd"/>
</dbReference>
<dbReference type="NCBIfam" id="TIGR01850">
    <property type="entry name" value="argC"/>
    <property type="match status" value="1"/>
</dbReference>
<dbReference type="PANTHER" id="PTHR32338:SF10">
    <property type="entry name" value="N-ACETYL-GAMMA-GLUTAMYL-PHOSPHATE REDUCTASE, CHLOROPLASTIC-RELATED"/>
    <property type="match status" value="1"/>
</dbReference>
<dbReference type="PANTHER" id="PTHR32338">
    <property type="entry name" value="N-ACETYL-GAMMA-GLUTAMYL-PHOSPHATE REDUCTASE, CHLOROPLASTIC-RELATED-RELATED"/>
    <property type="match status" value="1"/>
</dbReference>
<dbReference type="Pfam" id="PF01118">
    <property type="entry name" value="Semialdhyde_dh"/>
    <property type="match status" value="1"/>
</dbReference>
<dbReference type="Pfam" id="PF22698">
    <property type="entry name" value="Semialdhyde_dhC_1"/>
    <property type="match status" value="1"/>
</dbReference>
<dbReference type="SMART" id="SM00859">
    <property type="entry name" value="Semialdhyde_dh"/>
    <property type="match status" value="1"/>
</dbReference>
<dbReference type="SUPFAM" id="SSF55347">
    <property type="entry name" value="Glyceraldehyde-3-phosphate dehydrogenase-like, C-terminal domain"/>
    <property type="match status" value="1"/>
</dbReference>
<dbReference type="SUPFAM" id="SSF51735">
    <property type="entry name" value="NAD(P)-binding Rossmann-fold domains"/>
    <property type="match status" value="1"/>
</dbReference>
<dbReference type="PROSITE" id="PS01224">
    <property type="entry name" value="ARGC"/>
    <property type="match status" value="1"/>
</dbReference>